<proteinExistence type="inferred from homology"/>
<comment type="function">
    <text evidence="1">PPIases accelerate the folding of proteins. It catalyzes the cis-trans isomerization of proline imidic peptide bonds in oligopeptides (By similarity).</text>
</comment>
<comment type="catalytic activity">
    <reaction>
        <text>[protein]-peptidylproline (omega=180) = [protein]-peptidylproline (omega=0)</text>
        <dbReference type="Rhea" id="RHEA:16237"/>
        <dbReference type="Rhea" id="RHEA-COMP:10747"/>
        <dbReference type="Rhea" id="RHEA-COMP:10748"/>
        <dbReference type="ChEBI" id="CHEBI:83833"/>
        <dbReference type="ChEBI" id="CHEBI:83834"/>
        <dbReference type="EC" id="5.2.1.8"/>
    </reaction>
</comment>
<comment type="similarity">
    <text evidence="4">Belongs to the cyclophilin-type PPIase family.</text>
</comment>
<feature type="chain" id="PRO_0000244723" description="Peptidyl-prolyl cis-trans isomerase cyp15">
    <location>
        <begin position="1"/>
        <end position="630"/>
    </location>
</feature>
<feature type="repeat" description="WD 1">
    <location>
        <begin position="70"/>
        <end position="108"/>
    </location>
</feature>
<feature type="repeat" description="WD 2">
    <location>
        <begin position="113"/>
        <end position="152"/>
    </location>
</feature>
<feature type="repeat" description="WD 3">
    <location>
        <begin position="157"/>
        <end position="198"/>
    </location>
</feature>
<feature type="repeat" description="WD 4">
    <location>
        <begin position="203"/>
        <end position="242"/>
    </location>
</feature>
<feature type="repeat" description="WD 5">
    <location>
        <begin position="258"/>
        <end position="301"/>
    </location>
</feature>
<feature type="domain" description="PPIase cyclophilin-type" evidence="2">
    <location>
        <begin position="475"/>
        <end position="629"/>
    </location>
</feature>
<feature type="region of interest" description="Disordered" evidence="3">
    <location>
        <begin position="1"/>
        <end position="46"/>
    </location>
</feature>
<name>CYP15_RHIO9</name>
<sequence length="630" mass="71282">MPEDSNTNDNNKRPLEDNNAVDGESDDDIGPMLPPPPGEDAPRKKKRTLAHEKLYLDQLPCADMYEKSYMHRDVLSQVAVTKKDFIITTSVDGHLKFWKKTASGIEFVKHYKSHLSSIVDISISANHELLATISDDTTLKVYDITNFDMINMIKLRYKPKSVCWIHQSGQAQALVAVSEADNSNIHIYDGHADGKPLHTLSKMHSKPVHIIEFNSRFNCVVSVDAIGMIEYWSPEAPFALPDNLDFELKSQTDLYEFRKKKSVPTCLTFSPDGLSFATMSFPDRQVRLFKFLRGKMFREYDESLQAVSEMQQAGTTIHHLDDMEFGRRLAVEKELEKSNQARFVNAVFDNSGNFIIYGSLLGVKIVNIRTNKVVCLLGKSESNRFVNVSLYQGAPKKKAVYTLAMIASENAALKESQELDPTLFCTAFNKNRFYMMTRREPFDDINQKAERDIFNEKPSREEQTVAATQERKQILGTSAIIRTTSGDIHMRLFPDAAPKAVENFTTHAKNGYYDNLIFHRVIKGFMIQTGCPFGDGTGGESIWGDDFEDEFSREFRHDRPYTVSMANAGPNTNGSQFFITVAPTTWLDNKHSVFGRVTAGMDVVHSIESAKVDKTNKPLDDIKIINIDIR</sequence>
<keyword id="KW-0413">Isomerase</keyword>
<keyword id="KW-1185">Reference proteome</keyword>
<keyword id="KW-0677">Repeat</keyword>
<keyword id="KW-0697">Rotamase</keyword>
<keyword id="KW-0853">WD repeat</keyword>
<organism>
    <name type="scientific">Rhizopus delemar (strain RA 99-880 / ATCC MYA-4621 / FGSC 9543 / NRRL 43880)</name>
    <name type="common">Mucormycosis agent</name>
    <name type="synonym">Rhizopus arrhizus var. delemar</name>
    <dbReference type="NCBI Taxonomy" id="246409"/>
    <lineage>
        <taxon>Eukaryota</taxon>
        <taxon>Fungi</taxon>
        <taxon>Fungi incertae sedis</taxon>
        <taxon>Mucoromycota</taxon>
        <taxon>Mucoromycotina</taxon>
        <taxon>Mucoromycetes</taxon>
        <taxon>Mucorales</taxon>
        <taxon>Mucorineae</taxon>
        <taxon>Rhizopodaceae</taxon>
        <taxon>Rhizopus</taxon>
    </lineage>
</organism>
<accession>P0C1J0</accession>
<accession>I1CP28</accession>
<dbReference type="EC" id="5.2.1.8"/>
<dbReference type="EMBL" id="CH476746">
    <property type="protein sequence ID" value="EIE90208.1"/>
    <property type="molecule type" value="Genomic_DNA"/>
</dbReference>
<dbReference type="SMR" id="P0C1J0"/>
<dbReference type="FunCoup" id="P0C1J0">
    <property type="interactions" value="853"/>
</dbReference>
<dbReference type="STRING" id="246409.P0C1J0"/>
<dbReference type="VEuPathDB" id="FungiDB:RO3G_14919"/>
<dbReference type="eggNOG" id="KOG0882">
    <property type="taxonomic scope" value="Eukaryota"/>
</dbReference>
<dbReference type="InParanoid" id="P0C1J0"/>
<dbReference type="OMA" id="GMVEYWR"/>
<dbReference type="OrthoDB" id="16245at4827"/>
<dbReference type="Proteomes" id="UP000009138">
    <property type="component" value="Unassembled WGS sequence"/>
</dbReference>
<dbReference type="GO" id="GO:0003755">
    <property type="term" value="F:peptidyl-prolyl cis-trans isomerase activity"/>
    <property type="evidence" value="ECO:0007669"/>
    <property type="project" value="UniProtKB-KW"/>
</dbReference>
<dbReference type="GO" id="GO:0006457">
    <property type="term" value="P:protein folding"/>
    <property type="evidence" value="ECO:0007669"/>
    <property type="project" value="InterPro"/>
</dbReference>
<dbReference type="CDD" id="cd01927">
    <property type="entry name" value="cyclophilin_WD40"/>
    <property type="match status" value="1"/>
</dbReference>
<dbReference type="FunFam" id="2.40.100.10:FF:000003">
    <property type="entry name" value="Peptidylprolyl isomerase domain and WD repeat-containing 1"/>
    <property type="match status" value="1"/>
</dbReference>
<dbReference type="FunFam" id="2.130.10.10:FF:000450">
    <property type="entry name" value="Peptidylprolyl isomerase domain and WD-repeat protein 1"/>
    <property type="match status" value="1"/>
</dbReference>
<dbReference type="Gene3D" id="2.40.100.10">
    <property type="entry name" value="Cyclophilin-like"/>
    <property type="match status" value="1"/>
</dbReference>
<dbReference type="Gene3D" id="2.130.10.10">
    <property type="entry name" value="YVTN repeat-like/Quinoprotein amine dehydrogenase"/>
    <property type="match status" value="1"/>
</dbReference>
<dbReference type="InterPro" id="IPR029000">
    <property type="entry name" value="Cyclophilin-like_dom_sf"/>
</dbReference>
<dbReference type="InterPro" id="IPR020892">
    <property type="entry name" value="Cyclophilin-type_PPIase_CS"/>
</dbReference>
<dbReference type="InterPro" id="IPR002130">
    <property type="entry name" value="Cyclophilin-type_PPIase_dom"/>
</dbReference>
<dbReference type="InterPro" id="IPR044666">
    <property type="entry name" value="Cyclophilin_A-like"/>
</dbReference>
<dbReference type="InterPro" id="IPR015943">
    <property type="entry name" value="WD40/YVTN_repeat-like_dom_sf"/>
</dbReference>
<dbReference type="InterPro" id="IPR036322">
    <property type="entry name" value="WD40_repeat_dom_sf"/>
</dbReference>
<dbReference type="InterPro" id="IPR001680">
    <property type="entry name" value="WD40_rpt"/>
</dbReference>
<dbReference type="PANTHER" id="PTHR45625">
    <property type="entry name" value="PEPTIDYL-PROLYL CIS-TRANS ISOMERASE-RELATED"/>
    <property type="match status" value="1"/>
</dbReference>
<dbReference type="PANTHER" id="PTHR45625:SF4">
    <property type="entry name" value="PEPTIDYLPROLYL ISOMERASE DOMAIN AND WD REPEAT-CONTAINING PROTEIN 1"/>
    <property type="match status" value="1"/>
</dbReference>
<dbReference type="Pfam" id="PF00160">
    <property type="entry name" value="Pro_isomerase"/>
    <property type="match status" value="1"/>
</dbReference>
<dbReference type="Pfam" id="PF00400">
    <property type="entry name" value="WD40"/>
    <property type="match status" value="1"/>
</dbReference>
<dbReference type="PRINTS" id="PR00153">
    <property type="entry name" value="CSAPPISMRASE"/>
</dbReference>
<dbReference type="SMART" id="SM00320">
    <property type="entry name" value="WD40"/>
    <property type="match status" value="4"/>
</dbReference>
<dbReference type="SUPFAM" id="SSF50891">
    <property type="entry name" value="Cyclophilin-like"/>
    <property type="match status" value="1"/>
</dbReference>
<dbReference type="SUPFAM" id="SSF50978">
    <property type="entry name" value="WD40 repeat-like"/>
    <property type="match status" value="1"/>
</dbReference>
<dbReference type="PROSITE" id="PS00170">
    <property type="entry name" value="CSA_PPIASE_1"/>
    <property type="match status" value="1"/>
</dbReference>
<dbReference type="PROSITE" id="PS50072">
    <property type="entry name" value="CSA_PPIASE_2"/>
    <property type="match status" value="1"/>
</dbReference>
<dbReference type="PROSITE" id="PS50082">
    <property type="entry name" value="WD_REPEATS_2"/>
    <property type="match status" value="1"/>
</dbReference>
<dbReference type="PROSITE" id="PS50294">
    <property type="entry name" value="WD_REPEATS_REGION"/>
    <property type="match status" value="1"/>
</dbReference>
<evidence type="ECO:0000250" key="1"/>
<evidence type="ECO:0000255" key="2">
    <source>
        <dbReference type="PROSITE-ProRule" id="PRU00156"/>
    </source>
</evidence>
<evidence type="ECO:0000256" key="3">
    <source>
        <dbReference type="SAM" id="MobiDB-lite"/>
    </source>
</evidence>
<evidence type="ECO:0000305" key="4"/>
<reference key="1">
    <citation type="journal article" date="2009" name="PLoS Genet.">
        <title>Genomic analysis of the basal lineage fungus Rhizopus oryzae reveals a whole-genome duplication.</title>
        <authorList>
            <person name="Ma L.-J."/>
            <person name="Ibrahim A.S."/>
            <person name="Skory C."/>
            <person name="Grabherr M.G."/>
            <person name="Burger G."/>
            <person name="Butler M."/>
            <person name="Elias M."/>
            <person name="Idnurm A."/>
            <person name="Lang B.F."/>
            <person name="Sone T."/>
            <person name="Abe A."/>
            <person name="Calvo S.E."/>
            <person name="Corrochano L.M."/>
            <person name="Engels R."/>
            <person name="Fu J."/>
            <person name="Hansberg W."/>
            <person name="Kim J.-M."/>
            <person name="Kodira C.D."/>
            <person name="Koehrsen M.J."/>
            <person name="Liu B."/>
            <person name="Miranda-Saavedra D."/>
            <person name="O'Leary S."/>
            <person name="Ortiz-Castellanos L."/>
            <person name="Poulter R."/>
            <person name="Rodriguez-Romero J."/>
            <person name="Ruiz-Herrera J."/>
            <person name="Shen Y.-Q."/>
            <person name="Zeng Q."/>
            <person name="Galagan J."/>
            <person name="Birren B.W."/>
            <person name="Cuomo C.A."/>
            <person name="Wickes B.L."/>
        </authorList>
    </citation>
    <scope>NUCLEOTIDE SEQUENCE [LARGE SCALE GENOMIC DNA]</scope>
    <source>
        <strain>RA 99-880 / ATCC MYA-4621 / FGSC 9543 / NRRL 43880</strain>
    </source>
</reference>
<protein>
    <recommendedName>
        <fullName>Peptidyl-prolyl cis-trans isomerase cyp15</fullName>
        <shortName>PPIase cyp15</shortName>
        <ecNumber>5.2.1.8</ecNumber>
    </recommendedName>
    <alternativeName>
        <fullName>Cyclophilin cyp15</fullName>
    </alternativeName>
    <alternativeName>
        <fullName>Rotamase cyp15</fullName>
    </alternativeName>
</protein>
<gene>
    <name type="primary">cyp15</name>
    <name type="ORF">RO3G_14919</name>
</gene>